<keyword id="KW-0150">Chloroplast</keyword>
<keyword id="KW-0251">Elongation factor</keyword>
<keyword id="KW-0342">GTP-binding</keyword>
<keyword id="KW-0547">Nucleotide-binding</keyword>
<keyword id="KW-0934">Plastid</keyword>
<keyword id="KW-0648">Protein biosynthesis</keyword>
<keyword id="KW-1185">Reference proteome</keyword>
<keyword id="KW-0809">Transit peptide</keyword>
<reference key="1">
    <citation type="journal article" date="1996" name="Plant Sci.">
        <title>The tuf gene family of soybean: structure and differential expression.</title>
        <authorList>
            <person name="Maurer F."/>
            <person name="Murone M."/>
            <person name="Stutz E."/>
        </authorList>
    </citation>
    <scope>NUCLEOTIDE SEQUENCE [GENOMIC DNA]</scope>
    <source>
        <strain>cv. Ceresia</strain>
    </source>
</reference>
<feature type="transit peptide" description="Chloroplast" evidence="2">
    <location>
        <begin position="1"/>
        <end position="70"/>
    </location>
</feature>
<feature type="chain" id="PRO_0000007459" description="Elongation factor Tu, chloroplastic">
    <location>
        <begin position="71"/>
        <end position="479"/>
    </location>
</feature>
<feature type="domain" description="tr-type G">
    <location>
        <begin position="80"/>
        <end position="284"/>
    </location>
</feature>
<feature type="region of interest" description="G1" evidence="1">
    <location>
        <begin position="89"/>
        <end position="96"/>
    </location>
</feature>
<feature type="region of interest" description="G2" evidence="1">
    <location>
        <begin position="130"/>
        <end position="134"/>
    </location>
</feature>
<feature type="region of interest" description="G3" evidence="1">
    <location>
        <begin position="151"/>
        <end position="154"/>
    </location>
</feature>
<feature type="region of interest" description="G4" evidence="1">
    <location>
        <begin position="206"/>
        <end position="209"/>
    </location>
</feature>
<feature type="region of interest" description="G5" evidence="1">
    <location>
        <begin position="244"/>
        <end position="246"/>
    </location>
</feature>
<feature type="binding site" evidence="1">
    <location>
        <begin position="89"/>
        <end position="96"/>
    </location>
    <ligand>
        <name>GTP</name>
        <dbReference type="ChEBI" id="CHEBI:37565"/>
    </ligand>
</feature>
<feature type="binding site" evidence="1">
    <location>
        <begin position="151"/>
        <end position="155"/>
    </location>
    <ligand>
        <name>GTP</name>
        <dbReference type="ChEBI" id="CHEBI:37565"/>
    </ligand>
</feature>
<feature type="binding site" evidence="1">
    <location>
        <begin position="206"/>
        <end position="209"/>
    </location>
    <ligand>
        <name>GTP</name>
        <dbReference type="ChEBI" id="CHEBI:37565"/>
    </ligand>
</feature>
<name>EFTU2_SOYBN</name>
<gene>
    <name type="primary">TUFB1</name>
</gene>
<accession>P46280</accession>
<sequence length="479" mass="52509">MAISWAAATTSKLAYPPHVHFSPSPSSNYLFLKTHKPSATHLSSSFIHPTTILHLAAANTTTRRRSFTVRAARGKFERKKPHVNIGTIGHVDHGKTTLTAALTMALASLGNSAPKKYDEIDAAPEERARGITINTATVEYETENRHYAHVDCPGHADYVKNMITGAAQMDGAILVVSGADGPMPQTKEHILLAKQVGVPNIVVFLNKQDQVDDEELLQLVELEVRELLSKYEFPGDDVPIISGSALLSLEALMANPSIKRGENQWVDKIYELMEAVDDYIPIPQRQTELPFLLAIEDVFTITGRGTVATGRVERGTIRVGETVDIVGVKDTRNTTVTGVEMFQKILDEALAGDNVGLLLRGIQKTDIQRGMVLAKPGTITPHTKFSAIVYVLKKEEGGRHSPFFSGYRPQFYMRTTDVTGKVTEIMNDKDEESKMVMPGDRVKLVVELIVPVACEQGMRFAIREGGKTVGAGVIQSIIE</sequence>
<evidence type="ECO:0000250" key="1"/>
<evidence type="ECO:0000255" key="2"/>
<evidence type="ECO:0000305" key="3"/>
<proteinExistence type="inferred from homology"/>
<dbReference type="EMBL" id="X89058">
    <property type="protein sequence ID" value="CAA61444.1"/>
    <property type="molecule type" value="Genomic_DNA"/>
</dbReference>
<dbReference type="PIR" id="S60659">
    <property type="entry name" value="S60659"/>
</dbReference>
<dbReference type="SMR" id="P46280"/>
<dbReference type="FunCoup" id="P46280">
    <property type="interactions" value="4115"/>
</dbReference>
<dbReference type="STRING" id="3847.P46280"/>
<dbReference type="PaxDb" id="3847-GLYMA05G02670.2"/>
<dbReference type="eggNOG" id="KOG0460">
    <property type="taxonomic scope" value="Eukaryota"/>
</dbReference>
<dbReference type="InParanoid" id="P46280"/>
<dbReference type="Proteomes" id="UP000008827">
    <property type="component" value="Unplaced"/>
</dbReference>
<dbReference type="GO" id="GO:0009507">
    <property type="term" value="C:chloroplast"/>
    <property type="evidence" value="ECO:0007669"/>
    <property type="project" value="UniProtKB-SubCell"/>
</dbReference>
<dbReference type="GO" id="GO:0005739">
    <property type="term" value="C:mitochondrion"/>
    <property type="evidence" value="ECO:0000318"/>
    <property type="project" value="GO_Central"/>
</dbReference>
<dbReference type="GO" id="GO:0005525">
    <property type="term" value="F:GTP binding"/>
    <property type="evidence" value="ECO:0007669"/>
    <property type="project" value="UniProtKB-KW"/>
</dbReference>
<dbReference type="GO" id="GO:0003924">
    <property type="term" value="F:GTPase activity"/>
    <property type="evidence" value="ECO:0007669"/>
    <property type="project" value="InterPro"/>
</dbReference>
<dbReference type="GO" id="GO:0003746">
    <property type="term" value="F:translation elongation factor activity"/>
    <property type="evidence" value="ECO:0000318"/>
    <property type="project" value="GO_Central"/>
</dbReference>
<dbReference type="GO" id="GO:0070125">
    <property type="term" value="P:mitochondrial translational elongation"/>
    <property type="evidence" value="ECO:0000318"/>
    <property type="project" value="GO_Central"/>
</dbReference>
<dbReference type="CDD" id="cd01884">
    <property type="entry name" value="EF_Tu"/>
    <property type="match status" value="1"/>
</dbReference>
<dbReference type="CDD" id="cd03697">
    <property type="entry name" value="EFTU_II"/>
    <property type="match status" value="1"/>
</dbReference>
<dbReference type="CDD" id="cd03707">
    <property type="entry name" value="EFTU_III"/>
    <property type="match status" value="1"/>
</dbReference>
<dbReference type="FunFam" id="2.40.30.10:FF:000001">
    <property type="entry name" value="Elongation factor Tu"/>
    <property type="match status" value="1"/>
</dbReference>
<dbReference type="FunFam" id="2.40.30.10:FF:000046">
    <property type="entry name" value="Elongation factor Tu"/>
    <property type="match status" value="1"/>
</dbReference>
<dbReference type="FunFam" id="3.40.50.300:FF:000003">
    <property type="entry name" value="Elongation factor Tu"/>
    <property type="match status" value="1"/>
</dbReference>
<dbReference type="Gene3D" id="3.40.50.300">
    <property type="entry name" value="P-loop containing nucleotide triphosphate hydrolases"/>
    <property type="match status" value="1"/>
</dbReference>
<dbReference type="Gene3D" id="2.40.30.10">
    <property type="entry name" value="Translation factors"/>
    <property type="match status" value="2"/>
</dbReference>
<dbReference type="HAMAP" id="MF_00118_B">
    <property type="entry name" value="EF_Tu_B"/>
    <property type="match status" value="1"/>
</dbReference>
<dbReference type="InterPro" id="IPR041709">
    <property type="entry name" value="EF-Tu_GTP-bd"/>
</dbReference>
<dbReference type="InterPro" id="IPR050055">
    <property type="entry name" value="EF-Tu_GTPase"/>
</dbReference>
<dbReference type="InterPro" id="IPR004161">
    <property type="entry name" value="EFTu-like_2"/>
</dbReference>
<dbReference type="InterPro" id="IPR033720">
    <property type="entry name" value="EFTU_2"/>
</dbReference>
<dbReference type="InterPro" id="IPR031157">
    <property type="entry name" value="G_TR_CS"/>
</dbReference>
<dbReference type="InterPro" id="IPR027417">
    <property type="entry name" value="P-loop_NTPase"/>
</dbReference>
<dbReference type="InterPro" id="IPR005225">
    <property type="entry name" value="Small_GTP-bd"/>
</dbReference>
<dbReference type="InterPro" id="IPR000795">
    <property type="entry name" value="T_Tr_GTP-bd_dom"/>
</dbReference>
<dbReference type="InterPro" id="IPR009000">
    <property type="entry name" value="Transl_B-barrel_sf"/>
</dbReference>
<dbReference type="InterPro" id="IPR009001">
    <property type="entry name" value="Transl_elong_EF1A/Init_IF2_C"/>
</dbReference>
<dbReference type="InterPro" id="IPR004541">
    <property type="entry name" value="Transl_elong_EFTu/EF1A_bac/org"/>
</dbReference>
<dbReference type="InterPro" id="IPR004160">
    <property type="entry name" value="Transl_elong_EFTu/EF1A_C"/>
</dbReference>
<dbReference type="NCBIfam" id="TIGR00485">
    <property type="entry name" value="EF-Tu"/>
    <property type="match status" value="1"/>
</dbReference>
<dbReference type="NCBIfam" id="NF000766">
    <property type="entry name" value="PRK00049.1"/>
    <property type="match status" value="1"/>
</dbReference>
<dbReference type="NCBIfam" id="NF009372">
    <property type="entry name" value="PRK12735.1"/>
    <property type="match status" value="1"/>
</dbReference>
<dbReference type="NCBIfam" id="NF009373">
    <property type="entry name" value="PRK12736.1"/>
    <property type="match status" value="1"/>
</dbReference>
<dbReference type="NCBIfam" id="TIGR00231">
    <property type="entry name" value="small_GTP"/>
    <property type="match status" value="1"/>
</dbReference>
<dbReference type="PANTHER" id="PTHR43721:SF5">
    <property type="entry name" value="ELONGATION FACTOR TU, CHLOROPLASTIC"/>
    <property type="match status" value="1"/>
</dbReference>
<dbReference type="PANTHER" id="PTHR43721">
    <property type="entry name" value="ELONGATION FACTOR TU-RELATED"/>
    <property type="match status" value="1"/>
</dbReference>
<dbReference type="Pfam" id="PF00009">
    <property type="entry name" value="GTP_EFTU"/>
    <property type="match status" value="1"/>
</dbReference>
<dbReference type="Pfam" id="PF03144">
    <property type="entry name" value="GTP_EFTU_D2"/>
    <property type="match status" value="1"/>
</dbReference>
<dbReference type="Pfam" id="PF03143">
    <property type="entry name" value="GTP_EFTU_D3"/>
    <property type="match status" value="1"/>
</dbReference>
<dbReference type="PRINTS" id="PR00315">
    <property type="entry name" value="ELONGATNFCT"/>
</dbReference>
<dbReference type="SUPFAM" id="SSF50465">
    <property type="entry name" value="EF-Tu/eEF-1alpha/eIF2-gamma C-terminal domain"/>
    <property type="match status" value="1"/>
</dbReference>
<dbReference type="SUPFAM" id="SSF52540">
    <property type="entry name" value="P-loop containing nucleoside triphosphate hydrolases"/>
    <property type="match status" value="1"/>
</dbReference>
<dbReference type="SUPFAM" id="SSF50447">
    <property type="entry name" value="Translation proteins"/>
    <property type="match status" value="1"/>
</dbReference>
<dbReference type="PROSITE" id="PS00301">
    <property type="entry name" value="G_TR_1"/>
    <property type="match status" value="1"/>
</dbReference>
<dbReference type="PROSITE" id="PS51722">
    <property type="entry name" value="G_TR_2"/>
    <property type="match status" value="1"/>
</dbReference>
<comment type="function">
    <text>This protein promotes the GTP-dependent binding of aminoacyl-tRNA to the A-site of ribosomes during protein biosynthesis.</text>
</comment>
<comment type="subcellular location">
    <subcellularLocation>
        <location>Plastid</location>
        <location>Chloroplast</location>
    </subcellularLocation>
</comment>
<comment type="similarity">
    <text evidence="3">Belongs to the TRAFAC class translation factor GTPase superfamily. Classic translation factor GTPase family. EF-Tu/EF-1A subfamily.</text>
</comment>
<protein>
    <recommendedName>
        <fullName>Elongation factor Tu, chloroplastic</fullName>
        <shortName>EF-Tu</shortName>
    </recommendedName>
</protein>
<organism>
    <name type="scientific">Glycine max</name>
    <name type="common">Soybean</name>
    <name type="synonym">Glycine hispida</name>
    <dbReference type="NCBI Taxonomy" id="3847"/>
    <lineage>
        <taxon>Eukaryota</taxon>
        <taxon>Viridiplantae</taxon>
        <taxon>Streptophyta</taxon>
        <taxon>Embryophyta</taxon>
        <taxon>Tracheophyta</taxon>
        <taxon>Spermatophyta</taxon>
        <taxon>Magnoliopsida</taxon>
        <taxon>eudicotyledons</taxon>
        <taxon>Gunneridae</taxon>
        <taxon>Pentapetalae</taxon>
        <taxon>rosids</taxon>
        <taxon>fabids</taxon>
        <taxon>Fabales</taxon>
        <taxon>Fabaceae</taxon>
        <taxon>Papilionoideae</taxon>
        <taxon>50 kb inversion clade</taxon>
        <taxon>NPAAA clade</taxon>
        <taxon>indigoferoid/millettioid clade</taxon>
        <taxon>Phaseoleae</taxon>
        <taxon>Glycine</taxon>
        <taxon>Glycine subgen. Soja</taxon>
    </lineage>
</organism>